<feature type="chain" id="PRO_0000390699" description="Bacteriocin SRCAM 602">
    <location>
        <begin position="1"/>
        <end position="39"/>
    </location>
</feature>
<dbReference type="SMR" id="P86393"/>
<dbReference type="GO" id="GO:0005576">
    <property type="term" value="C:extracellular region"/>
    <property type="evidence" value="ECO:0007669"/>
    <property type="project" value="UniProtKB-SubCell"/>
</dbReference>
<dbReference type="GO" id="GO:0042742">
    <property type="term" value="P:defense response to bacterium"/>
    <property type="evidence" value="ECO:0007669"/>
    <property type="project" value="UniProtKB-KW"/>
</dbReference>
<dbReference type="GO" id="GO:0031640">
    <property type="term" value="P:killing of cells of another organism"/>
    <property type="evidence" value="ECO:0007669"/>
    <property type="project" value="UniProtKB-KW"/>
</dbReference>
<dbReference type="Gene3D" id="1.20.5.130">
    <property type="match status" value="1"/>
</dbReference>
<dbReference type="InterPro" id="IPR002633">
    <property type="entry name" value="Bacteriocin_IIa"/>
</dbReference>
<dbReference type="InterPro" id="IPR023388">
    <property type="entry name" value="Bacteriocin_IIa_dom_sf"/>
</dbReference>
<dbReference type="Pfam" id="PF01721">
    <property type="entry name" value="Bacteriocin_II"/>
    <property type="match status" value="1"/>
</dbReference>
<evidence type="ECO:0000255" key="1"/>
<evidence type="ECO:0000269" key="2">
    <source>
    </source>
</evidence>
<evidence type="ECO:0000303" key="3">
    <source>
    </source>
</evidence>
<evidence type="ECO:0000305" key="4"/>
<protein>
    <recommendedName>
        <fullName evidence="3">Bacteriocin SRCAM 602</fullName>
    </recommendedName>
</protein>
<comment type="function">
    <text evidence="2">Bacteriocin with antibacterial activity against C.jejuni.</text>
</comment>
<comment type="biophysicochemical properties">
    <phDependence>
        <text evidence="2">Stable from pH 3.0-9.0, inactivated at pH 10.0.</text>
    </phDependence>
    <temperatureDependence>
        <text evidence="2">Thermostable, activity is retained after incubation at 100 degrees Celsius for 15 minutes.</text>
    </temperatureDependence>
</comment>
<comment type="subcellular location">
    <subcellularLocation>
        <location evidence="2">Secreted</location>
    </subcellularLocation>
</comment>
<comment type="mass spectrometry"/>
<comment type="miscellaneous">
    <text evidence="2">Antimicrobial activity is lost upon treatment with beta-chymotrypsin, proteinase K and papain, but not when treated with lysozyme or lipase.</text>
</comment>
<comment type="similarity">
    <text evidence="1">Belongs to the bacteriocin class IIA/YGNGV family.</text>
</comment>
<accession>P86393</accession>
<proteinExistence type="evidence at protein level"/>
<sequence>ATYYGNGLYCNKQKHYTWVDWNKASREIGKITVNGWVQH</sequence>
<reference evidence="4" key="1">
    <citation type="journal article" date="2005" name="J. Food Prot.">
        <title>Isolation of Bacillus circulans and Paenibacillus polymyxa strains inhibitory to Campylobacter jejuni and characterization of associated bacteriocins.</title>
        <authorList>
            <person name="Svetoch E.A."/>
            <person name="Stern N.J."/>
            <person name="Eruslanov B.V."/>
            <person name="Kovalev Y.N."/>
            <person name="Volodina L.I."/>
            <person name="Perelygin V.V."/>
            <person name="Mitsevich E.V."/>
            <person name="Mitsevich I.P."/>
            <person name="Pokhilenko V.D."/>
            <person name="Borzenkov V.N."/>
            <person name="Levchuk V.P."/>
            <person name="Svetoch O.E."/>
            <person name="Kudriavtseva T.Y."/>
        </authorList>
    </citation>
    <scope>PROTEIN SEQUENCE</scope>
    <scope>FUNCTION</scope>
    <scope>BIOPHYSICOCHEMICAL PROPERTIES</scope>
    <scope>SUBCELLULAR LOCATION</scope>
    <scope>MASS SPECTROMETRY</scope>
    <source>
        <strain evidence="2">NRRL B-30509</strain>
    </source>
</reference>
<organism>
    <name type="scientific">Paenibacillus polymyxa</name>
    <name type="common">Bacillus polymyxa</name>
    <dbReference type="NCBI Taxonomy" id="1406"/>
    <lineage>
        <taxon>Bacteria</taxon>
        <taxon>Bacillati</taxon>
        <taxon>Bacillota</taxon>
        <taxon>Bacilli</taxon>
        <taxon>Bacillales</taxon>
        <taxon>Paenibacillaceae</taxon>
        <taxon>Paenibacillus</taxon>
    </lineage>
</organism>
<keyword id="KW-0044">Antibiotic</keyword>
<keyword id="KW-0929">Antimicrobial</keyword>
<keyword id="KW-0078">Bacteriocin</keyword>
<keyword id="KW-0903">Direct protein sequencing</keyword>
<keyword id="KW-0964">Secreted</keyword>
<name>BCN02_PAEPO</name>